<protein>
    <recommendedName>
        <fullName evidence="1">DNA replication and repair protein RecF</fullName>
    </recommendedName>
</protein>
<gene>
    <name evidence="1" type="primary">recF</name>
    <name type="ordered locus">Mmcs_0004</name>
</gene>
<reference key="1">
    <citation type="submission" date="2006-06" db="EMBL/GenBank/DDBJ databases">
        <title>Complete sequence of chromosome of Mycobacterium sp. MCS.</title>
        <authorList>
            <consortium name="US DOE Joint Genome Institute"/>
            <person name="Copeland A."/>
            <person name="Lucas S."/>
            <person name="Lapidus A."/>
            <person name="Barry K."/>
            <person name="Detter J.C."/>
            <person name="Glavina del Rio T."/>
            <person name="Hammon N."/>
            <person name="Israni S."/>
            <person name="Dalin E."/>
            <person name="Tice H."/>
            <person name="Pitluck S."/>
            <person name="Martinez M."/>
            <person name="Schmutz J."/>
            <person name="Larimer F."/>
            <person name="Land M."/>
            <person name="Hauser L."/>
            <person name="Kyrpides N."/>
            <person name="Kim E."/>
            <person name="Miller C.D."/>
            <person name="Hughes J.E."/>
            <person name="Anderson A.J."/>
            <person name="Sims R.C."/>
            <person name="Richardson P."/>
        </authorList>
    </citation>
    <scope>NUCLEOTIDE SEQUENCE [LARGE SCALE GENOMIC DNA]</scope>
    <source>
        <strain>MCS</strain>
    </source>
</reference>
<evidence type="ECO:0000255" key="1">
    <source>
        <dbReference type="HAMAP-Rule" id="MF_00365"/>
    </source>
</evidence>
<name>RECF_MYCSS</name>
<dbReference type="EMBL" id="CP000384">
    <property type="protein sequence ID" value="ABG06126.1"/>
    <property type="molecule type" value="Genomic_DNA"/>
</dbReference>
<dbReference type="SMR" id="Q1BG58"/>
<dbReference type="KEGG" id="mmc:Mmcs_0004"/>
<dbReference type="HOGENOM" id="CLU_040267_1_1_11"/>
<dbReference type="BioCyc" id="MSP164756:G1G6O-4-MONOMER"/>
<dbReference type="GO" id="GO:0005737">
    <property type="term" value="C:cytoplasm"/>
    <property type="evidence" value="ECO:0007669"/>
    <property type="project" value="UniProtKB-SubCell"/>
</dbReference>
<dbReference type="GO" id="GO:0005524">
    <property type="term" value="F:ATP binding"/>
    <property type="evidence" value="ECO:0007669"/>
    <property type="project" value="UniProtKB-UniRule"/>
</dbReference>
<dbReference type="GO" id="GO:0003697">
    <property type="term" value="F:single-stranded DNA binding"/>
    <property type="evidence" value="ECO:0007669"/>
    <property type="project" value="UniProtKB-UniRule"/>
</dbReference>
<dbReference type="GO" id="GO:0006260">
    <property type="term" value="P:DNA replication"/>
    <property type="evidence" value="ECO:0007669"/>
    <property type="project" value="UniProtKB-UniRule"/>
</dbReference>
<dbReference type="GO" id="GO:0000731">
    <property type="term" value="P:DNA synthesis involved in DNA repair"/>
    <property type="evidence" value="ECO:0007669"/>
    <property type="project" value="TreeGrafter"/>
</dbReference>
<dbReference type="GO" id="GO:0006302">
    <property type="term" value="P:double-strand break repair"/>
    <property type="evidence" value="ECO:0007669"/>
    <property type="project" value="TreeGrafter"/>
</dbReference>
<dbReference type="GO" id="GO:0009432">
    <property type="term" value="P:SOS response"/>
    <property type="evidence" value="ECO:0007669"/>
    <property type="project" value="UniProtKB-UniRule"/>
</dbReference>
<dbReference type="CDD" id="cd03242">
    <property type="entry name" value="ABC_RecF"/>
    <property type="match status" value="1"/>
</dbReference>
<dbReference type="Gene3D" id="3.40.50.300">
    <property type="entry name" value="P-loop containing nucleotide triphosphate hydrolases"/>
    <property type="match status" value="1"/>
</dbReference>
<dbReference type="Gene3D" id="1.20.1050.90">
    <property type="entry name" value="RecF/RecN/SMC, N-terminal domain"/>
    <property type="match status" value="1"/>
</dbReference>
<dbReference type="HAMAP" id="MF_00365">
    <property type="entry name" value="RecF"/>
    <property type="match status" value="1"/>
</dbReference>
<dbReference type="InterPro" id="IPR001238">
    <property type="entry name" value="DNA-binding_RecF"/>
</dbReference>
<dbReference type="InterPro" id="IPR018078">
    <property type="entry name" value="DNA-binding_RecF_CS"/>
</dbReference>
<dbReference type="InterPro" id="IPR027417">
    <property type="entry name" value="P-loop_NTPase"/>
</dbReference>
<dbReference type="InterPro" id="IPR003395">
    <property type="entry name" value="RecF/RecN/SMC_N"/>
</dbReference>
<dbReference type="InterPro" id="IPR042174">
    <property type="entry name" value="RecF_2"/>
</dbReference>
<dbReference type="NCBIfam" id="TIGR00611">
    <property type="entry name" value="recf"/>
    <property type="match status" value="1"/>
</dbReference>
<dbReference type="PANTHER" id="PTHR32182">
    <property type="entry name" value="DNA REPLICATION AND REPAIR PROTEIN RECF"/>
    <property type="match status" value="1"/>
</dbReference>
<dbReference type="PANTHER" id="PTHR32182:SF0">
    <property type="entry name" value="DNA REPLICATION AND REPAIR PROTEIN RECF"/>
    <property type="match status" value="1"/>
</dbReference>
<dbReference type="Pfam" id="PF02463">
    <property type="entry name" value="SMC_N"/>
    <property type="match status" value="1"/>
</dbReference>
<dbReference type="SUPFAM" id="SSF52540">
    <property type="entry name" value="P-loop containing nucleoside triphosphate hydrolases"/>
    <property type="match status" value="1"/>
</dbReference>
<dbReference type="PROSITE" id="PS00617">
    <property type="entry name" value="RECF_1"/>
    <property type="match status" value="1"/>
</dbReference>
<dbReference type="PROSITE" id="PS00618">
    <property type="entry name" value="RECF_2"/>
    <property type="match status" value="1"/>
</dbReference>
<proteinExistence type="inferred from homology"/>
<feature type="chain" id="PRO_1000048545" description="DNA replication and repair protein RecF">
    <location>
        <begin position="1"/>
        <end position="380"/>
    </location>
</feature>
<feature type="binding site" evidence="1">
    <location>
        <begin position="30"/>
        <end position="37"/>
    </location>
    <ligand>
        <name>ATP</name>
        <dbReference type="ChEBI" id="CHEBI:30616"/>
    </ligand>
</feature>
<comment type="function">
    <text evidence="1">The RecF protein is involved in DNA metabolism; it is required for DNA replication and normal SOS inducibility. RecF binds preferentially to single-stranded, linear DNA. It also seems to bind ATP.</text>
</comment>
<comment type="subcellular location">
    <subcellularLocation>
        <location evidence="1">Cytoplasm</location>
    </subcellularLocation>
</comment>
<comment type="similarity">
    <text evidence="1">Belongs to the RecF family.</text>
</comment>
<accession>Q1BG58</accession>
<sequence length="380" mass="41879">MFVRHLTLTDFRSWARADLELEPGRTVFVGPNGFGKTNLVEALWYSATLGSHRVASDAPLIRVGAPRAVVSTIVVNEGRELAVDLEITTGRANKARLNRSPVRSPREVLGVLRAVLFAPEDLALVRGDPGERRRYLDELATTRRPSIAGVRADYDRVIRQRTALLKSAAGARYRGDRSVLETLDVWDGHLAAHGALLMAARADLVHHLAPEVEKAYQLLAPGSRPAAIRYRTSIDAEDDVSAEYYEAALLDAMTRRRDAELERGVCLVGPHRDDLELRLGDQMAKGYASHGESWSMALSLRLAAYELLRTDGSDPVLLLDDVFAELDAARRRALAEVAASAEQVLVTAAVAEDIPADWDARRIMIRMQDDDDGRVSMVES</sequence>
<keyword id="KW-0067">ATP-binding</keyword>
<keyword id="KW-0963">Cytoplasm</keyword>
<keyword id="KW-0227">DNA damage</keyword>
<keyword id="KW-0234">DNA repair</keyword>
<keyword id="KW-0235">DNA replication</keyword>
<keyword id="KW-0238">DNA-binding</keyword>
<keyword id="KW-0547">Nucleotide-binding</keyword>
<keyword id="KW-0742">SOS response</keyword>
<organism>
    <name type="scientific">Mycobacterium sp. (strain MCS)</name>
    <dbReference type="NCBI Taxonomy" id="164756"/>
    <lineage>
        <taxon>Bacteria</taxon>
        <taxon>Bacillati</taxon>
        <taxon>Actinomycetota</taxon>
        <taxon>Actinomycetes</taxon>
        <taxon>Mycobacteriales</taxon>
        <taxon>Mycobacteriaceae</taxon>
        <taxon>Mycobacterium</taxon>
    </lineage>
</organism>